<keyword id="KW-0131">Cell cycle</keyword>
<keyword id="KW-0132">Cell division</keyword>
<keyword id="KW-0997">Cell inner membrane</keyword>
<keyword id="KW-1003">Cell membrane</keyword>
<keyword id="KW-0133">Cell shape</keyword>
<keyword id="KW-0961">Cell wall biogenesis/degradation</keyword>
<keyword id="KW-0328">Glycosyltransferase</keyword>
<keyword id="KW-0472">Membrane</keyword>
<keyword id="KW-0573">Peptidoglycan synthesis</keyword>
<keyword id="KW-0808">Transferase</keyword>
<name>MURG_SHEHH</name>
<accession>B0TQN7</accession>
<dbReference type="EC" id="2.4.1.227" evidence="1"/>
<dbReference type="EMBL" id="CP000931">
    <property type="protein sequence ID" value="ABZ75030.1"/>
    <property type="molecule type" value="Genomic_DNA"/>
</dbReference>
<dbReference type="RefSeq" id="WP_012275584.1">
    <property type="nucleotide sequence ID" value="NC_010334.1"/>
</dbReference>
<dbReference type="SMR" id="B0TQN7"/>
<dbReference type="STRING" id="458817.Shal_0455"/>
<dbReference type="CAZy" id="GT28">
    <property type="family name" value="Glycosyltransferase Family 28"/>
</dbReference>
<dbReference type="KEGG" id="shl:Shal_0455"/>
<dbReference type="eggNOG" id="COG0707">
    <property type="taxonomic scope" value="Bacteria"/>
</dbReference>
<dbReference type="HOGENOM" id="CLU_037404_2_0_6"/>
<dbReference type="OrthoDB" id="9808936at2"/>
<dbReference type="UniPathway" id="UPA00219"/>
<dbReference type="Proteomes" id="UP000001317">
    <property type="component" value="Chromosome"/>
</dbReference>
<dbReference type="GO" id="GO:0005886">
    <property type="term" value="C:plasma membrane"/>
    <property type="evidence" value="ECO:0007669"/>
    <property type="project" value="UniProtKB-SubCell"/>
</dbReference>
<dbReference type="GO" id="GO:0051991">
    <property type="term" value="F:UDP-N-acetyl-D-glucosamine:N-acetylmuramoyl-L-alanyl-D-glutamyl-meso-2,6-diaminopimelyl-D-alanyl-D-alanine-diphosphoundecaprenol 4-beta-N-acetylglucosaminlytransferase activity"/>
    <property type="evidence" value="ECO:0007669"/>
    <property type="project" value="RHEA"/>
</dbReference>
<dbReference type="GO" id="GO:0050511">
    <property type="term" value="F:undecaprenyldiphospho-muramoylpentapeptide beta-N-acetylglucosaminyltransferase activity"/>
    <property type="evidence" value="ECO:0007669"/>
    <property type="project" value="UniProtKB-UniRule"/>
</dbReference>
<dbReference type="GO" id="GO:0005975">
    <property type="term" value="P:carbohydrate metabolic process"/>
    <property type="evidence" value="ECO:0007669"/>
    <property type="project" value="InterPro"/>
</dbReference>
<dbReference type="GO" id="GO:0051301">
    <property type="term" value="P:cell division"/>
    <property type="evidence" value="ECO:0007669"/>
    <property type="project" value="UniProtKB-KW"/>
</dbReference>
<dbReference type="GO" id="GO:0071555">
    <property type="term" value="P:cell wall organization"/>
    <property type="evidence" value="ECO:0007669"/>
    <property type="project" value="UniProtKB-KW"/>
</dbReference>
<dbReference type="GO" id="GO:0030259">
    <property type="term" value="P:lipid glycosylation"/>
    <property type="evidence" value="ECO:0007669"/>
    <property type="project" value="UniProtKB-UniRule"/>
</dbReference>
<dbReference type="GO" id="GO:0009252">
    <property type="term" value="P:peptidoglycan biosynthetic process"/>
    <property type="evidence" value="ECO:0007669"/>
    <property type="project" value="UniProtKB-UniRule"/>
</dbReference>
<dbReference type="GO" id="GO:0008360">
    <property type="term" value="P:regulation of cell shape"/>
    <property type="evidence" value="ECO:0007669"/>
    <property type="project" value="UniProtKB-KW"/>
</dbReference>
<dbReference type="CDD" id="cd03785">
    <property type="entry name" value="GT28_MurG"/>
    <property type="match status" value="1"/>
</dbReference>
<dbReference type="Gene3D" id="3.40.50.2000">
    <property type="entry name" value="Glycogen Phosphorylase B"/>
    <property type="match status" value="2"/>
</dbReference>
<dbReference type="HAMAP" id="MF_00033">
    <property type="entry name" value="MurG"/>
    <property type="match status" value="1"/>
</dbReference>
<dbReference type="InterPro" id="IPR006009">
    <property type="entry name" value="GlcNAc_MurG"/>
</dbReference>
<dbReference type="InterPro" id="IPR007235">
    <property type="entry name" value="Glyco_trans_28_C"/>
</dbReference>
<dbReference type="InterPro" id="IPR004276">
    <property type="entry name" value="GlycoTrans_28_N"/>
</dbReference>
<dbReference type="NCBIfam" id="TIGR01133">
    <property type="entry name" value="murG"/>
    <property type="match status" value="1"/>
</dbReference>
<dbReference type="PANTHER" id="PTHR21015:SF22">
    <property type="entry name" value="GLYCOSYLTRANSFERASE"/>
    <property type="match status" value="1"/>
</dbReference>
<dbReference type="PANTHER" id="PTHR21015">
    <property type="entry name" value="UDP-N-ACETYLGLUCOSAMINE--N-ACETYLMURAMYL-(PENTAPEPTIDE) PYROPHOSPHORYL-UNDECAPRENOL N-ACETYLGLUCOSAMINE TRANSFERASE 1"/>
    <property type="match status" value="1"/>
</dbReference>
<dbReference type="Pfam" id="PF04101">
    <property type="entry name" value="Glyco_tran_28_C"/>
    <property type="match status" value="1"/>
</dbReference>
<dbReference type="Pfam" id="PF03033">
    <property type="entry name" value="Glyco_transf_28"/>
    <property type="match status" value="1"/>
</dbReference>
<dbReference type="SUPFAM" id="SSF53756">
    <property type="entry name" value="UDP-Glycosyltransferase/glycogen phosphorylase"/>
    <property type="match status" value="1"/>
</dbReference>
<sequence>MTNQAEEKRILIMAGGTGGHVFPALAVAKYLSQQGWKVRWLGTAERMEARLVPQHGFDIDFIDIKGVRGNGLMRKLAAPFKIIRSVMQARAVIKKFKPHVVMGMGGFASGPGGVAAKLSGIPLVLHEQNAIPGMTNRLLSRIASEVLCAFDGTFTDIKAETVGNPIRKELIALGEKRKPVCDDDSLKVLVVGGSLGAKIFNDVMPSVLEGVSKTHSMTVWHQVGRDNLATVKAEYQRLGQDGSVSVAEFIDDMEAAYRWADVVVCRSGALTVSELAAVGLPSLLVPYPHAVDDHQTKNAKVLVNAGAAFLLPQPIVDTSKLMTKLSMLASDKQELCNMGQRARDVAILDATQRVANVCIRLAEKG</sequence>
<proteinExistence type="inferred from homology"/>
<feature type="chain" id="PRO_1000074470" description="UDP-N-acetylglucosamine--N-acetylmuramyl-(pentapeptide) pyrophosphoryl-undecaprenol N-acetylglucosamine transferase">
    <location>
        <begin position="1"/>
        <end position="365"/>
    </location>
</feature>
<feature type="binding site" evidence="1">
    <location>
        <begin position="17"/>
        <end position="19"/>
    </location>
    <ligand>
        <name>UDP-N-acetyl-alpha-D-glucosamine</name>
        <dbReference type="ChEBI" id="CHEBI:57705"/>
    </ligand>
</feature>
<feature type="binding site" evidence="1">
    <location>
        <position position="129"/>
    </location>
    <ligand>
        <name>UDP-N-acetyl-alpha-D-glucosamine</name>
        <dbReference type="ChEBI" id="CHEBI:57705"/>
    </ligand>
</feature>
<feature type="binding site" evidence="1">
    <location>
        <position position="167"/>
    </location>
    <ligand>
        <name>UDP-N-acetyl-alpha-D-glucosamine</name>
        <dbReference type="ChEBI" id="CHEBI:57705"/>
    </ligand>
</feature>
<feature type="binding site" evidence="1">
    <location>
        <position position="194"/>
    </location>
    <ligand>
        <name>UDP-N-acetyl-alpha-D-glucosamine</name>
        <dbReference type="ChEBI" id="CHEBI:57705"/>
    </ligand>
</feature>
<feature type="binding site" evidence="1">
    <location>
        <position position="250"/>
    </location>
    <ligand>
        <name>UDP-N-acetyl-alpha-D-glucosamine</name>
        <dbReference type="ChEBI" id="CHEBI:57705"/>
    </ligand>
</feature>
<feature type="binding site" evidence="1">
    <location>
        <begin position="269"/>
        <end position="274"/>
    </location>
    <ligand>
        <name>UDP-N-acetyl-alpha-D-glucosamine</name>
        <dbReference type="ChEBI" id="CHEBI:57705"/>
    </ligand>
</feature>
<feature type="binding site" evidence="1">
    <location>
        <position position="295"/>
    </location>
    <ligand>
        <name>UDP-N-acetyl-alpha-D-glucosamine</name>
        <dbReference type="ChEBI" id="CHEBI:57705"/>
    </ligand>
</feature>
<evidence type="ECO:0000255" key="1">
    <source>
        <dbReference type="HAMAP-Rule" id="MF_00033"/>
    </source>
</evidence>
<gene>
    <name evidence="1" type="primary">murG</name>
    <name type="ordered locus">Shal_0455</name>
</gene>
<protein>
    <recommendedName>
        <fullName evidence="1">UDP-N-acetylglucosamine--N-acetylmuramyl-(pentapeptide) pyrophosphoryl-undecaprenol N-acetylglucosamine transferase</fullName>
        <ecNumber evidence="1">2.4.1.227</ecNumber>
    </recommendedName>
    <alternativeName>
        <fullName evidence="1">Undecaprenyl-PP-MurNAc-pentapeptide-UDPGlcNAc GlcNAc transferase</fullName>
    </alternativeName>
</protein>
<organism>
    <name type="scientific">Shewanella halifaxensis (strain HAW-EB4)</name>
    <dbReference type="NCBI Taxonomy" id="458817"/>
    <lineage>
        <taxon>Bacteria</taxon>
        <taxon>Pseudomonadati</taxon>
        <taxon>Pseudomonadota</taxon>
        <taxon>Gammaproteobacteria</taxon>
        <taxon>Alteromonadales</taxon>
        <taxon>Shewanellaceae</taxon>
        <taxon>Shewanella</taxon>
    </lineage>
</organism>
<comment type="function">
    <text evidence="1">Cell wall formation. Catalyzes the transfer of a GlcNAc subunit on undecaprenyl-pyrophosphoryl-MurNAc-pentapeptide (lipid intermediate I) to form undecaprenyl-pyrophosphoryl-MurNAc-(pentapeptide)GlcNAc (lipid intermediate II).</text>
</comment>
<comment type="catalytic activity">
    <reaction evidence="1">
        <text>di-trans,octa-cis-undecaprenyl diphospho-N-acetyl-alpha-D-muramoyl-L-alanyl-D-glutamyl-meso-2,6-diaminopimeloyl-D-alanyl-D-alanine + UDP-N-acetyl-alpha-D-glucosamine = di-trans,octa-cis-undecaprenyl diphospho-[N-acetyl-alpha-D-glucosaminyl-(1-&gt;4)]-N-acetyl-alpha-D-muramoyl-L-alanyl-D-glutamyl-meso-2,6-diaminopimeloyl-D-alanyl-D-alanine + UDP + H(+)</text>
        <dbReference type="Rhea" id="RHEA:31227"/>
        <dbReference type="ChEBI" id="CHEBI:15378"/>
        <dbReference type="ChEBI" id="CHEBI:57705"/>
        <dbReference type="ChEBI" id="CHEBI:58223"/>
        <dbReference type="ChEBI" id="CHEBI:61387"/>
        <dbReference type="ChEBI" id="CHEBI:61388"/>
        <dbReference type="EC" id="2.4.1.227"/>
    </reaction>
</comment>
<comment type="pathway">
    <text evidence="1">Cell wall biogenesis; peptidoglycan biosynthesis.</text>
</comment>
<comment type="subcellular location">
    <subcellularLocation>
        <location evidence="1">Cell inner membrane</location>
        <topology evidence="1">Peripheral membrane protein</topology>
        <orientation evidence="1">Cytoplasmic side</orientation>
    </subcellularLocation>
</comment>
<comment type="similarity">
    <text evidence="1">Belongs to the glycosyltransferase 28 family. MurG subfamily.</text>
</comment>
<reference key="1">
    <citation type="submission" date="2008-01" db="EMBL/GenBank/DDBJ databases">
        <title>Complete sequence of Shewanella halifaxensis HAW-EB4.</title>
        <authorList>
            <consortium name="US DOE Joint Genome Institute"/>
            <person name="Copeland A."/>
            <person name="Lucas S."/>
            <person name="Lapidus A."/>
            <person name="Glavina del Rio T."/>
            <person name="Dalin E."/>
            <person name="Tice H."/>
            <person name="Bruce D."/>
            <person name="Goodwin L."/>
            <person name="Pitluck S."/>
            <person name="Sims D."/>
            <person name="Brettin T."/>
            <person name="Detter J.C."/>
            <person name="Han C."/>
            <person name="Kuske C.R."/>
            <person name="Schmutz J."/>
            <person name="Larimer F."/>
            <person name="Land M."/>
            <person name="Hauser L."/>
            <person name="Kyrpides N."/>
            <person name="Kim E."/>
            <person name="Zhao J.-S."/>
            <person name="Richardson P."/>
        </authorList>
    </citation>
    <scope>NUCLEOTIDE SEQUENCE [LARGE SCALE GENOMIC DNA]</scope>
    <source>
        <strain>HAW-EB4</strain>
    </source>
</reference>